<evidence type="ECO:0000255" key="1">
    <source>
        <dbReference type="HAMAP-Rule" id="MF_00671"/>
    </source>
</evidence>
<organism>
    <name type="scientific">Chromobacterium violaceum (strain ATCC 12472 / DSM 30191 / JCM 1249 / CCUG 213 / NBRC 12614 / NCIMB 9131 / NCTC 9757 / MK)</name>
    <dbReference type="NCBI Taxonomy" id="243365"/>
    <lineage>
        <taxon>Bacteria</taxon>
        <taxon>Pseudomonadati</taxon>
        <taxon>Pseudomonadota</taxon>
        <taxon>Betaproteobacteria</taxon>
        <taxon>Neisseriales</taxon>
        <taxon>Chromobacteriaceae</taxon>
        <taxon>Chromobacterium</taxon>
    </lineage>
</organism>
<sequence length="428" mass="45642">MPSLKTLLRGVLVAAMLVAGSARAELNIEIIGGGASRHAISVLPFKDEGPTQGNLTPVIRNDLALSGAFRLIDPSAVANVPFEPADIRYPLWQAAGAQSLAIGKVESAGGGQIKISFRLMDASQRKQLTGGEFTVTPDRSRQVAHAIADMIYEAITGQKGFFNTRLAYVLKSGRSYALQISDVDGQRSQTILRSTEPIISPSWSPDGRHIAYVSFASQKPVVWVQDLATGQRRAVANFKGSNSAPAWSPDGSKLAVVLTTSGNSQIYIINAAGGPARRLMYNGGIDTEPAFSPDGSMVYFVSDRSGNPQIYRVPVNGGNAQRVTWEGAYNVSPKLSPDGKTLVYIRRSAGNFRVMSQDLATNDSRQLSDGSYSERPSFAPNGRMVLYSSDAGGQSVLYAATADGSSKVKLAVLNGDVQDPAWGPFNNP</sequence>
<proteinExistence type="inferred from homology"/>
<keyword id="KW-0131">Cell cycle</keyword>
<keyword id="KW-0132">Cell division</keyword>
<keyword id="KW-0574">Periplasm</keyword>
<keyword id="KW-1185">Reference proteome</keyword>
<keyword id="KW-0732">Signal</keyword>
<reference key="1">
    <citation type="journal article" date="2003" name="Proc. Natl. Acad. Sci. U.S.A.">
        <title>The complete genome sequence of Chromobacterium violaceum reveals remarkable and exploitable bacterial adaptability.</title>
        <authorList>
            <person name="Vasconcelos A.T.R."/>
            <person name="de Almeida D.F."/>
            <person name="Hungria M."/>
            <person name="Guimaraes C.T."/>
            <person name="Antonio R.V."/>
            <person name="Almeida F.C."/>
            <person name="de Almeida L.G.P."/>
            <person name="de Almeida R."/>
            <person name="Alves-Gomes J.A."/>
            <person name="Andrade E.M."/>
            <person name="Araripe J."/>
            <person name="de Araujo M.F.F."/>
            <person name="Astolfi-Filho S."/>
            <person name="Azevedo V."/>
            <person name="Baptista A.J."/>
            <person name="Bataus L.A.M."/>
            <person name="Batista J.S."/>
            <person name="Belo A."/>
            <person name="van den Berg C."/>
            <person name="Bogo M."/>
            <person name="Bonatto S."/>
            <person name="Bordignon J."/>
            <person name="Brigido M.M."/>
            <person name="Brito C.A."/>
            <person name="Brocchi M."/>
            <person name="Burity H.A."/>
            <person name="Camargo A.A."/>
            <person name="Cardoso D.D.P."/>
            <person name="Carneiro N.P."/>
            <person name="Carraro D.M."/>
            <person name="Carvalho C.M.B."/>
            <person name="Cascardo J.C.M."/>
            <person name="Cavada B.S."/>
            <person name="Chueire L.M.O."/>
            <person name="Creczynski-Pasa T.B."/>
            <person name="Cunha-Junior N.C."/>
            <person name="Fagundes N."/>
            <person name="Falcao C.L."/>
            <person name="Fantinatti F."/>
            <person name="Farias I.P."/>
            <person name="Felipe M.S.S."/>
            <person name="Ferrari L.P."/>
            <person name="Ferro J.A."/>
            <person name="Ferro M.I.T."/>
            <person name="Franco G.R."/>
            <person name="Freitas N.S.A."/>
            <person name="Furlan L.R."/>
            <person name="Gazzinelli R.T."/>
            <person name="Gomes E.A."/>
            <person name="Goncalves P.R."/>
            <person name="Grangeiro T.B."/>
            <person name="Grattapaglia D."/>
            <person name="Grisard E.C."/>
            <person name="Hanna E.S."/>
            <person name="Jardim S.N."/>
            <person name="Laurino J."/>
            <person name="Leoi L.C.T."/>
            <person name="Lima L.F.A."/>
            <person name="Loureiro M.F."/>
            <person name="Lyra M.C.C.P."/>
            <person name="Madeira H.M.F."/>
            <person name="Manfio G.P."/>
            <person name="Maranhao A.Q."/>
            <person name="Martins W.S."/>
            <person name="di Mauro S.M.Z."/>
            <person name="de Medeiros S.R.B."/>
            <person name="Meissner R.V."/>
            <person name="Moreira M.A.M."/>
            <person name="Nascimento F.F."/>
            <person name="Nicolas M.F."/>
            <person name="Oliveira J.G."/>
            <person name="Oliveira S.C."/>
            <person name="Paixao R.F.C."/>
            <person name="Parente J.A."/>
            <person name="Pedrosa F.O."/>
            <person name="Pena S.D.J."/>
            <person name="Pereira J.O."/>
            <person name="Pereira M."/>
            <person name="Pinto L.S.R.C."/>
            <person name="Pinto L.S."/>
            <person name="Porto J.I.R."/>
            <person name="Potrich D.P."/>
            <person name="Ramalho-Neto C.E."/>
            <person name="Reis A.M.M."/>
            <person name="Rigo L.U."/>
            <person name="Rondinelli E."/>
            <person name="Santos E.B.P."/>
            <person name="Santos F.R."/>
            <person name="Schneider M.P.C."/>
            <person name="Seuanez H.N."/>
            <person name="Silva A.M.R."/>
            <person name="da Silva A.L.C."/>
            <person name="Silva D.W."/>
            <person name="Silva R."/>
            <person name="Simoes I.C."/>
            <person name="Simon D."/>
            <person name="Soares C.M.A."/>
            <person name="Soares R.B.A."/>
            <person name="Souza E.M."/>
            <person name="Souza K.R.L."/>
            <person name="Souza R.C."/>
            <person name="Steffens M.B.R."/>
            <person name="Steindel M."/>
            <person name="Teixeira S.R."/>
            <person name="Urmenyi T."/>
            <person name="Vettore A."/>
            <person name="Wassem R."/>
            <person name="Zaha A."/>
            <person name="Simpson A.J.G."/>
        </authorList>
    </citation>
    <scope>NUCLEOTIDE SEQUENCE [LARGE SCALE GENOMIC DNA]</scope>
    <source>
        <strain>ATCC 12472 / DSM 30191 / JCM 1249 / CCUG 213 / NBRC 12614 / NCIMB 9131 / NCTC 9757 / MK</strain>
    </source>
</reference>
<name>TOLB_CHRVO</name>
<comment type="function">
    <text evidence="1">Part of the Tol-Pal system, which plays a role in outer membrane invagination during cell division and is important for maintaining outer membrane integrity.</text>
</comment>
<comment type="subunit">
    <text evidence="1">The Tol-Pal system is composed of five core proteins: the inner membrane proteins TolA, TolQ and TolR, the periplasmic protein TolB and the outer membrane protein Pal. They form a network linking the inner and outer membranes and the peptidoglycan layer.</text>
</comment>
<comment type="subcellular location">
    <subcellularLocation>
        <location evidence="1">Periplasm</location>
    </subcellularLocation>
</comment>
<comment type="similarity">
    <text evidence="1">Belongs to the TolB family.</text>
</comment>
<gene>
    <name evidence="1" type="primary">tolB</name>
    <name type="ordered locus">CV_0109</name>
</gene>
<protein>
    <recommendedName>
        <fullName evidence="1">Tol-Pal system protein TolB</fullName>
    </recommendedName>
</protein>
<dbReference type="EMBL" id="AE016825">
    <property type="protein sequence ID" value="AAQ57788.1"/>
    <property type="molecule type" value="Genomic_DNA"/>
</dbReference>
<dbReference type="RefSeq" id="WP_011133664.1">
    <property type="nucleotide sequence ID" value="NC_005085.1"/>
</dbReference>
<dbReference type="SMR" id="Q7P1V3"/>
<dbReference type="STRING" id="243365.CV_0109"/>
<dbReference type="KEGG" id="cvi:CV_0109"/>
<dbReference type="eggNOG" id="COG0823">
    <property type="taxonomic scope" value="Bacteria"/>
</dbReference>
<dbReference type="HOGENOM" id="CLU_047123_0_0_4"/>
<dbReference type="OrthoDB" id="9802240at2"/>
<dbReference type="Proteomes" id="UP000001424">
    <property type="component" value="Chromosome"/>
</dbReference>
<dbReference type="GO" id="GO:0042597">
    <property type="term" value="C:periplasmic space"/>
    <property type="evidence" value="ECO:0007669"/>
    <property type="project" value="UniProtKB-SubCell"/>
</dbReference>
<dbReference type="GO" id="GO:0051301">
    <property type="term" value="P:cell division"/>
    <property type="evidence" value="ECO:0007669"/>
    <property type="project" value="UniProtKB-UniRule"/>
</dbReference>
<dbReference type="GO" id="GO:0017038">
    <property type="term" value="P:protein import"/>
    <property type="evidence" value="ECO:0007669"/>
    <property type="project" value="InterPro"/>
</dbReference>
<dbReference type="Gene3D" id="2.120.10.30">
    <property type="entry name" value="TolB, C-terminal domain"/>
    <property type="match status" value="1"/>
</dbReference>
<dbReference type="Gene3D" id="3.40.50.10070">
    <property type="entry name" value="TolB, N-terminal domain"/>
    <property type="match status" value="1"/>
</dbReference>
<dbReference type="HAMAP" id="MF_00671">
    <property type="entry name" value="TolB"/>
    <property type="match status" value="1"/>
</dbReference>
<dbReference type="InterPro" id="IPR011042">
    <property type="entry name" value="6-blade_b-propeller_TolB-like"/>
</dbReference>
<dbReference type="InterPro" id="IPR011659">
    <property type="entry name" value="PD40"/>
</dbReference>
<dbReference type="InterPro" id="IPR014167">
    <property type="entry name" value="Tol-Pal_TolB"/>
</dbReference>
<dbReference type="InterPro" id="IPR007195">
    <property type="entry name" value="TolB_N"/>
</dbReference>
<dbReference type="NCBIfam" id="TIGR02800">
    <property type="entry name" value="propeller_TolB"/>
    <property type="match status" value="1"/>
</dbReference>
<dbReference type="PANTHER" id="PTHR36842:SF1">
    <property type="entry name" value="PROTEIN TOLB"/>
    <property type="match status" value="1"/>
</dbReference>
<dbReference type="PANTHER" id="PTHR36842">
    <property type="entry name" value="PROTEIN TOLB HOMOLOG"/>
    <property type="match status" value="1"/>
</dbReference>
<dbReference type="Pfam" id="PF07676">
    <property type="entry name" value="PD40"/>
    <property type="match status" value="5"/>
</dbReference>
<dbReference type="Pfam" id="PF04052">
    <property type="entry name" value="TolB_N"/>
    <property type="match status" value="1"/>
</dbReference>
<dbReference type="SUPFAM" id="SSF52964">
    <property type="entry name" value="TolB, N-terminal domain"/>
    <property type="match status" value="1"/>
</dbReference>
<dbReference type="SUPFAM" id="SSF69304">
    <property type="entry name" value="Tricorn protease N-terminal domain"/>
    <property type="match status" value="1"/>
</dbReference>
<accession>Q7P1V3</accession>
<feature type="signal peptide" evidence="1">
    <location>
        <begin position="1"/>
        <end position="24"/>
    </location>
</feature>
<feature type="chain" id="PRO_0000034643" description="Tol-Pal system protein TolB" evidence="1">
    <location>
        <begin position="25"/>
        <end position="428"/>
    </location>
</feature>